<organism>
    <name type="scientific">Homo sapiens</name>
    <name type="common">Human</name>
    <dbReference type="NCBI Taxonomy" id="9606"/>
    <lineage>
        <taxon>Eukaryota</taxon>
        <taxon>Metazoa</taxon>
        <taxon>Chordata</taxon>
        <taxon>Craniata</taxon>
        <taxon>Vertebrata</taxon>
        <taxon>Euteleostomi</taxon>
        <taxon>Mammalia</taxon>
        <taxon>Eutheria</taxon>
        <taxon>Euarchontoglires</taxon>
        <taxon>Primates</taxon>
        <taxon>Haplorrhini</taxon>
        <taxon>Catarrhini</taxon>
        <taxon>Hominidae</taxon>
        <taxon>Homo</taxon>
    </lineage>
</organism>
<sequence>MAMMVFPREEKLSQDEIVLGTKAVIQGLETLRGEHRALLAPLVAPEAGEAEPGSQERCILLRRSLEAIELGLGEAQVILALSSHLGAVESEKQKLRAQVRRLVQENQWLREELAGTQQKLQRSEQAVAQLEEEKQHLLFMSQIRKLDEDASPNEEKGDVPKDTLDDLFPNEDEQSPAPSPGGGDVSGQHGGYEIPARLRTLHNLVIQYASQGRYEVAVPLCKQALEDLEKTSGHDHPDVATMLNILALVYRDQNKYKEAAHLLNDALAIREKTLGKDHPAVAATLNNLAVLYGKRGKYKEAEPLCKRALEIREKVLGKFHPDVAKQLSNLALLCQNQGKAEEVEYYYRRALEIYATRLGPDDPNVAKTKNNLASCYLKQGKYQDAETLYKEILTRAHEKEFGSVNGDNKPIWMHAEEREESKDKRRDSAPYGEYGSWYKACKVDSPTVNTTLRSLGALYRRQGKLEAAHTLEDCASRNRKQGLDPASQTKVVELLKDGSGRRGDRRSSRDMAGGAGPRSESDLEDVGPTAEWNGDGSGSLRRSGSFGKLRDALRRSSEMLVKKLQGGTPQEPPNPRMKRASSLNFLNKSVEEPTQPGGTGLSDSRTLSSSSMDLSRRSSLVG</sequence>
<accession>Q9H0B6</accession>
<accession>A8MXL7</accession>
<accession>B2RDY4</accession>
<accession>Q9H9C8</accession>
<accession>Q9HA20</accession>
<gene>
    <name evidence="9" type="primary">KLC2</name>
</gene>
<keyword id="KW-0002">3D-structure</keyword>
<keyword id="KW-0025">Alternative splicing</keyword>
<keyword id="KW-0175">Coiled coil</keyword>
<keyword id="KW-0963">Cytoplasm</keyword>
<keyword id="KW-0206">Cytoskeleton</keyword>
<keyword id="KW-0890">Hereditary spastic paraplegia</keyword>
<keyword id="KW-0458">Lysosome</keyword>
<keyword id="KW-0472">Membrane</keyword>
<keyword id="KW-0493">Microtubule</keyword>
<keyword id="KW-0505">Motor protein</keyword>
<keyword id="KW-0523">Neurodegeneration</keyword>
<keyword id="KW-0622">Neuropathy</keyword>
<keyword id="KW-0597">Phosphoprotein</keyword>
<keyword id="KW-1267">Proteomics identification</keyword>
<keyword id="KW-1185">Reference proteome</keyword>
<keyword id="KW-0677">Repeat</keyword>
<keyword id="KW-0802">TPR repeat</keyword>
<name>KLC2_HUMAN</name>
<feature type="chain" id="PRO_0000215095" description="Kinesin light chain 2">
    <location>
        <begin position="1"/>
        <end position="622"/>
    </location>
</feature>
<feature type="repeat" description="TPR 1">
    <location>
        <begin position="198"/>
        <end position="231"/>
    </location>
</feature>
<feature type="repeat" description="TPR 2">
    <location>
        <begin position="240"/>
        <end position="273"/>
    </location>
</feature>
<feature type="repeat" description="TPR 3">
    <location>
        <begin position="282"/>
        <end position="315"/>
    </location>
</feature>
<feature type="repeat" description="TPR 4">
    <location>
        <begin position="324"/>
        <end position="357"/>
    </location>
</feature>
<feature type="repeat" description="TPR 5">
    <location>
        <begin position="366"/>
        <end position="399"/>
    </location>
</feature>
<feature type="repeat" description="TPR 6">
    <location>
        <begin position="449"/>
        <end position="482"/>
    </location>
</feature>
<feature type="region of interest" description="Disordered" evidence="3">
    <location>
        <begin position="145"/>
        <end position="191"/>
    </location>
</feature>
<feature type="region of interest" description="Disordered" evidence="3">
    <location>
        <begin position="476"/>
        <end position="548"/>
    </location>
</feature>
<feature type="region of interest" description="Disordered" evidence="3">
    <location>
        <begin position="563"/>
        <end position="622"/>
    </location>
</feature>
<feature type="coiled-coil region" evidence="2">
    <location>
        <begin position="78"/>
        <end position="143"/>
    </location>
</feature>
<feature type="compositionally biased region" description="Basic and acidic residues" evidence="3">
    <location>
        <begin position="145"/>
        <end position="164"/>
    </location>
</feature>
<feature type="compositionally biased region" description="Gly residues" evidence="3">
    <location>
        <begin position="180"/>
        <end position="190"/>
    </location>
</feature>
<feature type="compositionally biased region" description="Basic and acidic residues" evidence="3">
    <location>
        <begin position="493"/>
        <end position="509"/>
    </location>
</feature>
<feature type="compositionally biased region" description="Low complexity" evidence="3">
    <location>
        <begin position="538"/>
        <end position="547"/>
    </location>
</feature>
<feature type="compositionally biased region" description="Low complexity" evidence="3">
    <location>
        <begin position="601"/>
        <end position="622"/>
    </location>
</feature>
<feature type="modified residue" description="Phosphoserine" evidence="12">
    <location>
        <position position="151"/>
    </location>
</feature>
<feature type="modified residue" description="Phosphoserine" evidence="1">
    <location>
        <position position="175"/>
    </location>
</feature>
<feature type="modified residue" description="Phosphoserine" evidence="1">
    <location>
        <position position="179"/>
    </location>
</feature>
<feature type="modified residue" description="Phosphoserine" evidence="10 11 12 14">
    <location>
        <position position="445"/>
    </location>
</feature>
<feature type="modified residue" description="Phosphoserine" evidence="1">
    <location>
        <position position="508"/>
    </location>
</feature>
<feature type="modified residue" description="Phosphoserine" evidence="14">
    <location>
        <position position="521"/>
    </location>
</feature>
<feature type="modified residue" description="Phosphoserine" evidence="12 14">
    <location>
        <position position="581"/>
    </location>
</feature>
<feature type="modified residue" description="Phosphoserine" evidence="11 12 13 14">
    <location>
        <position position="582"/>
    </location>
</feature>
<feature type="modified residue" description="Phosphoserine" evidence="11 12 14">
    <location>
        <position position="589"/>
    </location>
</feature>
<feature type="modified residue" description="Phosphoserine" evidence="14">
    <location>
        <position position="608"/>
    </location>
</feature>
<feature type="modified residue" description="Phosphoserine" evidence="13 14">
    <location>
        <position position="610"/>
    </location>
</feature>
<feature type="modified residue" description="Phosphoserine" evidence="14">
    <location>
        <position position="615"/>
    </location>
</feature>
<feature type="splice variant" id="VSP_043486" description="In isoform 2." evidence="6">
    <location>
        <begin position="77"/>
        <end position="153"/>
    </location>
</feature>
<feature type="sequence variant" id="VAR_020379" description="In dbSNP:rs2276036.">
    <original>P</original>
    <variation>S</variation>
    <location>
        <position position="517"/>
    </location>
</feature>
<feature type="sequence conflict" description="In Ref. 2; BAB14302." evidence="7" ref="2">
    <original>F</original>
    <variation>Y</variation>
    <location>
        <position position="6"/>
    </location>
</feature>
<feature type="sequence conflict" description="In Ref. 2; BAB14039." evidence="7" ref="2">
    <original>K</original>
    <variation>R</variation>
    <location>
        <position position="306"/>
    </location>
</feature>
<feature type="helix" evidence="16">
    <location>
        <begin position="217"/>
        <end position="232"/>
    </location>
</feature>
<feature type="strand" evidence="16">
    <location>
        <begin position="234"/>
        <end position="236"/>
    </location>
</feature>
<feature type="helix" evidence="16">
    <location>
        <begin position="237"/>
        <end position="252"/>
    </location>
</feature>
<feature type="helix" evidence="16">
    <location>
        <begin position="256"/>
        <end position="273"/>
    </location>
</feature>
<feature type="helix" evidence="16">
    <location>
        <begin position="279"/>
        <end position="293"/>
    </location>
</feature>
<feature type="turn" evidence="16">
    <location>
        <begin position="294"/>
        <end position="296"/>
    </location>
</feature>
<feature type="helix" evidence="16">
    <location>
        <begin position="298"/>
        <end position="316"/>
    </location>
</feature>
<feature type="helix" evidence="16">
    <location>
        <begin position="321"/>
        <end position="335"/>
    </location>
</feature>
<feature type="turn" evidence="16">
    <location>
        <begin position="336"/>
        <end position="338"/>
    </location>
</feature>
<feature type="helix" evidence="16">
    <location>
        <begin position="340"/>
        <end position="357"/>
    </location>
</feature>
<feature type="helix" evidence="16">
    <location>
        <begin position="363"/>
        <end position="379"/>
    </location>
</feature>
<feature type="helix" evidence="16">
    <location>
        <begin position="382"/>
        <end position="400"/>
    </location>
</feature>
<feature type="strand" evidence="16">
    <location>
        <begin position="401"/>
        <end position="403"/>
    </location>
</feature>
<feature type="helix" evidence="16">
    <location>
        <begin position="411"/>
        <end position="420"/>
    </location>
</feature>
<feature type="strand" evidence="15">
    <location>
        <begin position="427"/>
        <end position="429"/>
    </location>
</feature>
<feature type="strand" evidence="15">
    <location>
        <begin position="431"/>
        <end position="433"/>
    </location>
</feature>
<feature type="helix" evidence="16">
    <location>
        <begin position="446"/>
        <end position="461"/>
    </location>
</feature>
<feature type="helix" evidence="16">
    <location>
        <begin position="465"/>
        <end position="476"/>
    </location>
</feature>
<evidence type="ECO:0000250" key="1">
    <source>
        <dbReference type="UniProtKB" id="O88448"/>
    </source>
</evidence>
<evidence type="ECO:0000255" key="2"/>
<evidence type="ECO:0000256" key="3">
    <source>
        <dbReference type="SAM" id="MobiDB-lite"/>
    </source>
</evidence>
<evidence type="ECO:0000269" key="4">
    <source>
    </source>
</evidence>
<evidence type="ECO:0000269" key="5">
    <source>
    </source>
</evidence>
<evidence type="ECO:0000303" key="6">
    <source>
    </source>
</evidence>
<evidence type="ECO:0000305" key="7"/>
<evidence type="ECO:0000305" key="8">
    <source>
    </source>
</evidence>
<evidence type="ECO:0000312" key="9">
    <source>
        <dbReference type="HGNC" id="HGNC:20716"/>
    </source>
</evidence>
<evidence type="ECO:0007744" key="10">
    <source>
    </source>
</evidence>
<evidence type="ECO:0007744" key="11">
    <source>
    </source>
</evidence>
<evidence type="ECO:0007744" key="12">
    <source>
    </source>
</evidence>
<evidence type="ECO:0007744" key="13">
    <source>
    </source>
</evidence>
<evidence type="ECO:0007744" key="14">
    <source>
    </source>
</evidence>
<evidence type="ECO:0007829" key="15">
    <source>
        <dbReference type="PDB" id="3CEQ"/>
    </source>
</evidence>
<evidence type="ECO:0007829" key="16">
    <source>
        <dbReference type="PDB" id="3EDT"/>
    </source>
</evidence>
<comment type="function">
    <text evidence="4 8">Kinesin is a microtubule-associated force-producing protein that plays a role in organelle transport. The light chain functions in coupling of cargo to the heavy chain or in the modulation of its ATPase activity (Probable). Through binding with PLEKHM2 and ARL8B, recruits kinesin-1 to lysosomes and hence direct lysosomes movement toward microtubule plus ends (PubMed:22172677).</text>
</comment>
<comment type="subunit">
    <text evidence="7 8">Oligomeric complex composed of two heavy chains and two light chains (Probable). Interacts (via TPR repeats) with PLEKHM2 (Probable).</text>
</comment>
<comment type="interaction">
    <interactant intactId="EBI-726994">
        <id>Q9H0B6</id>
    </interactant>
    <interactant intactId="EBI-2869338">
        <id>Q9BQS8</id>
        <label>FYCO1</label>
    </interactant>
    <organismsDiffer>false</organismsDiffer>
    <experiments>2</experiments>
</comment>
<comment type="interaction">
    <interactant intactId="EBI-726994">
        <id>Q9H0B6</id>
    </interactant>
    <interactant intactId="EBI-476295">
        <id>P31947</id>
        <label>SFN</label>
    </interactant>
    <organismsDiffer>false</organismsDiffer>
    <experiments>5</experiments>
</comment>
<comment type="interaction">
    <interactant intactId="EBI-726994">
        <id>Q9H0B6</id>
    </interactant>
    <interactant intactId="EBI-356498">
        <id>P62258</id>
        <label>YWHAE</label>
    </interactant>
    <organismsDiffer>false</organismsDiffer>
    <experiments>6</experiments>
</comment>
<comment type="interaction">
    <interactant intactId="EBI-726994">
        <id>Q9H0B6</id>
    </interactant>
    <interactant intactId="EBI-347088">
        <id>P63104</id>
        <label>YWHAZ</label>
    </interactant>
    <organismsDiffer>false</organismsDiffer>
    <experiments>6</experiments>
</comment>
<comment type="interaction">
    <interactant intactId="EBI-726994">
        <id>Q9H0B6</id>
    </interactant>
    <interactant intactId="EBI-25475856">
        <id>P0DTC9</id>
        <label>N</label>
    </interactant>
    <organismsDiffer>true</organismsDiffer>
    <experiments>4</experiments>
</comment>
<comment type="subcellular location">
    <subcellularLocation>
        <location evidence="7">Cytoplasm</location>
        <location evidence="7">Cytoskeleton</location>
    </subcellularLocation>
    <subcellularLocation>
        <location evidence="4">Lysosome membrane</location>
        <topology evidence="8">Peripheral membrane protein</topology>
        <orientation evidence="8">Cytoplasmic side</orientation>
    </subcellularLocation>
</comment>
<comment type="alternative products">
    <event type="alternative splicing"/>
    <isoform>
        <id>Q9H0B6-1</id>
        <name>1</name>
        <sequence type="displayed"/>
    </isoform>
    <isoform>
        <id>Q9H0B6-2</id>
        <name>2</name>
        <sequence type="described" ref="VSP_043486"/>
    </isoform>
</comment>
<comment type="disease" evidence="5">
    <disease id="DI-04659">
        <name>Spastic paraplegia, optic atrophy, and neuropathy</name>
        <acronym>SPOAN</acronym>
        <description>A form of spastic paraplegia, a neurodegenerative disorder characterized by a slow, gradual, progressive weakness and spasticity of the lower limbs. Rate of progression and the severity of symptoms are quite variable. Initial symptoms may include difficulty with balance, weakness and stiffness in the legs, muscle spasms, and dragging the toes when walking. In some forms of the disorder, bladder symptoms (such as incontinence) may appear, or the weakness and stiffness may spread to other parts of the body. SPOAN is characterized by spastic paraplegia with progressive joint contractures and spine deformities, loss of independent ambulation by age 10 years, sub-normal vision secondary to congenital optic atrophy, and neuropathy. Inheritance is autosomal recessive.</description>
        <dbReference type="MIM" id="609541"/>
    </disease>
    <text evidence="5">The gene represented in this entry is involved in disease pathogenesis. The disease is caused by a homozygous deletion in the non-coding region of the KLC2 gene.</text>
</comment>
<comment type="similarity">
    <text evidence="7">Belongs to the kinesin light chain family.</text>
</comment>
<proteinExistence type="evidence at protein level"/>
<protein>
    <recommendedName>
        <fullName evidence="7">Kinesin light chain 2</fullName>
        <shortName>KLC 2</shortName>
    </recommendedName>
</protein>
<reference key="1">
    <citation type="journal article" date="2001" name="Genome Res.">
        <title>Towards a catalog of human genes and proteins: sequencing and analysis of 500 novel complete protein coding human cDNAs.</title>
        <authorList>
            <person name="Wiemann S."/>
            <person name="Weil B."/>
            <person name="Wellenreuther R."/>
            <person name="Gassenhuber J."/>
            <person name="Glassl S."/>
            <person name="Ansorge W."/>
            <person name="Boecher M."/>
            <person name="Bloecker H."/>
            <person name="Bauersachs S."/>
            <person name="Blum H."/>
            <person name="Lauber J."/>
            <person name="Duesterhoeft A."/>
            <person name="Beyer A."/>
            <person name="Koehrer K."/>
            <person name="Strack N."/>
            <person name="Mewes H.-W."/>
            <person name="Ottenwaelder B."/>
            <person name="Obermaier B."/>
            <person name="Tampe J."/>
            <person name="Heubner D."/>
            <person name="Wambutt R."/>
            <person name="Korn B."/>
            <person name="Klein M."/>
            <person name="Poustka A."/>
        </authorList>
    </citation>
    <scope>NUCLEOTIDE SEQUENCE [LARGE SCALE MRNA] (ISOFORM 1)</scope>
    <source>
        <tissue>Testis</tissue>
    </source>
</reference>
<reference key="2">
    <citation type="journal article" date="2004" name="Nat. Genet.">
        <title>Complete sequencing and characterization of 21,243 full-length human cDNAs.</title>
        <authorList>
            <person name="Ota T."/>
            <person name="Suzuki Y."/>
            <person name="Nishikawa T."/>
            <person name="Otsuki T."/>
            <person name="Sugiyama T."/>
            <person name="Irie R."/>
            <person name="Wakamatsu A."/>
            <person name="Hayashi K."/>
            <person name="Sato H."/>
            <person name="Nagai K."/>
            <person name="Kimura K."/>
            <person name="Makita H."/>
            <person name="Sekine M."/>
            <person name="Obayashi M."/>
            <person name="Nishi T."/>
            <person name="Shibahara T."/>
            <person name="Tanaka T."/>
            <person name="Ishii S."/>
            <person name="Yamamoto J."/>
            <person name="Saito K."/>
            <person name="Kawai Y."/>
            <person name="Isono Y."/>
            <person name="Nakamura Y."/>
            <person name="Nagahari K."/>
            <person name="Murakami K."/>
            <person name="Yasuda T."/>
            <person name="Iwayanagi T."/>
            <person name="Wagatsuma M."/>
            <person name="Shiratori A."/>
            <person name="Sudo H."/>
            <person name="Hosoiri T."/>
            <person name="Kaku Y."/>
            <person name="Kodaira H."/>
            <person name="Kondo H."/>
            <person name="Sugawara M."/>
            <person name="Takahashi M."/>
            <person name="Kanda K."/>
            <person name="Yokoi T."/>
            <person name="Furuya T."/>
            <person name="Kikkawa E."/>
            <person name="Omura Y."/>
            <person name="Abe K."/>
            <person name="Kamihara K."/>
            <person name="Katsuta N."/>
            <person name="Sato K."/>
            <person name="Tanikawa M."/>
            <person name="Yamazaki M."/>
            <person name="Ninomiya K."/>
            <person name="Ishibashi T."/>
            <person name="Yamashita H."/>
            <person name="Murakawa K."/>
            <person name="Fujimori K."/>
            <person name="Tanai H."/>
            <person name="Kimata M."/>
            <person name="Watanabe M."/>
            <person name="Hiraoka S."/>
            <person name="Chiba Y."/>
            <person name="Ishida S."/>
            <person name="Ono Y."/>
            <person name="Takiguchi S."/>
            <person name="Watanabe S."/>
            <person name="Yosida M."/>
            <person name="Hotuta T."/>
            <person name="Kusano J."/>
            <person name="Kanehori K."/>
            <person name="Takahashi-Fujii A."/>
            <person name="Hara H."/>
            <person name="Tanase T.-O."/>
            <person name="Nomura Y."/>
            <person name="Togiya S."/>
            <person name="Komai F."/>
            <person name="Hara R."/>
            <person name="Takeuchi K."/>
            <person name="Arita M."/>
            <person name="Imose N."/>
            <person name="Musashino K."/>
            <person name="Yuuki H."/>
            <person name="Oshima A."/>
            <person name="Sasaki N."/>
            <person name="Aotsuka S."/>
            <person name="Yoshikawa Y."/>
            <person name="Matsunawa H."/>
            <person name="Ichihara T."/>
            <person name="Shiohata N."/>
            <person name="Sano S."/>
            <person name="Moriya S."/>
            <person name="Momiyama H."/>
            <person name="Satoh N."/>
            <person name="Takami S."/>
            <person name="Terashima Y."/>
            <person name="Suzuki O."/>
            <person name="Nakagawa S."/>
            <person name="Senoh A."/>
            <person name="Mizoguchi H."/>
            <person name="Goto Y."/>
            <person name="Shimizu F."/>
            <person name="Wakebe H."/>
            <person name="Hishigaki H."/>
            <person name="Watanabe T."/>
            <person name="Sugiyama A."/>
            <person name="Takemoto M."/>
            <person name="Kawakami B."/>
            <person name="Yamazaki M."/>
            <person name="Watanabe K."/>
            <person name="Kumagai A."/>
            <person name="Itakura S."/>
            <person name="Fukuzumi Y."/>
            <person name="Fujimori Y."/>
            <person name="Komiyama M."/>
            <person name="Tashiro H."/>
            <person name="Tanigami A."/>
            <person name="Fujiwara T."/>
            <person name="Ono T."/>
            <person name="Yamada K."/>
            <person name="Fujii Y."/>
            <person name="Ozaki K."/>
            <person name="Hirao M."/>
            <person name="Ohmori Y."/>
            <person name="Kawabata A."/>
            <person name="Hikiji T."/>
            <person name="Kobatake N."/>
            <person name="Inagaki H."/>
            <person name="Ikema Y."/>
            <person name="Okamoto S."/>
            <person name="Okitani R."/>
            <person name="Kawakami T."/>
            <person name="Noguchi S."/>
            <person name="Itoh T."/>
            <person name="Shigeta K."/>
            <person name="Senba T."/>
            <person name="Matsumura K."/>
            <person name="Nakajima Y."/>
            <person name="Mizuno T."/>
            <person name="Morinaga M."/>
            <person name="Sasaki M."/>
            <person name="Togashi T."/>
            <person name="Oyama M."/>
            <person name="Hata H."/>
            <person name="Watanabe M."/>
            <person name="Komatsu T."/>
            <person name="Mizushima-Sugano J."/>
            <person name="Satoh T."/>
            <person name="Shirai Y."/>
            <person name="Takahashi Y."/>
            <person name="Nakagawa K."/>
            <person name="Okumura K."/>
            <person name="Nagase T."/>
            <person name="Nomura N."/>
            <person name="Kikuchi H."/>
            <person name="Masuho Y."/>
            <person name="Yamashita R."/>
            <person name="Nakai K."/>
            <person name="Yada T."/>
            <person name="Nakamura Y."/>
            <person name="Ohara O."/>
            <person name="Isogai T."/>
            <person name="Sugano S."/>
        </authorList>
    </citation>
    <scope>NUCLEOTIDE SEQUENCE [LARGE SCALE MRNA] (ISOFORMS 1 AND 2)</scope>
    <source>
        <tissue>Mammary gland</tissue>
        <tissue>Testis</tissue>
    </source>
</reference>
<reference key="3">
    <citation type="journal article" date="2006" name="Nature">
        <title>Human chromosome 11 DNA sequence and analysis including novel gene identification.</title>
        <authorList>
            <person name="Taylor T.D."/>
            <person name="Noguchi H."/>
            <person name="Totoki Y."/>
            <person name="Toyoda A."/>
            <person name="Kuroki Y."/>
            <person name="Dewar K."/>
            <person name="Lloyd C."/>
            <person name="Itoh T."/>
            <person name="Takeda T."/>
            <person name="Kim D.-W."/>
            <person name="She X."/>
            <person name="Barlow K.F."/>
            <person name="Bloom T."/>
            <person name="Bruford E."/>
            <person name="Chang J.L."/>
            <person name="Cuomo C.A."/>
            <person name="Eichler E."/>
            <person name="FitzGerald M.G."/>
            <person name="Jaffe D.B."/>
            <person name="LaButti K."/>
            <person name="Nicol R."/>
            <person name="Park H.-S."/>
            <person name="Seaman C."/>
            <person name="Sougnez C."/>
            <person name="Yang X."/>
            <person name="Zimmer A.R."/>
            <person name="Zody M.C."/>
            <person name="Birren B.W."/>
            <person name="Nusbaum C."/>
            <person name="Fujiyama A."/>
            <person name="Hattori M."/>
            <person name="Rogers J."/>
            <person name="Lander E.S."/>
            <person name="Sakaki Y."/>
        </authorList>
    </citation>
    <scope>NUCLEOTIDE SEQUENCE [LARGE SCALE GENOMIC DNA]</scope>
</reference>
<reference key="4">
    <citation type="journal article" date="2004" name="Genome Res.">
        <title>The status, quality, and expansion of the NIH full-length cDNA project: the Mammalian Gene Collection (MGC).</title>
        <authorList>
            <consortium name="The MGC Project Team"/>
        </authorList>
    </citation>
    <scope>NUCLEOTIDE SEQUENCE [LARGE SCALE MRNA] (ISOFORM 1)</scope>
    <source>
        <tissue>Lymph</tissue>
    </source>
</reference>
<reference key="5">
    <citation type="journal article" date="2006" name="Cell">
        <title>Global, in vivo, and site-specific phosphorylation dynamics in signaling networks.</title>
        <authorList>
            <person name="Olsen J.V."/>
            <person name="Blagoev B."/>
            <person name="Gnad F."/>
            <person name="Macek B."/>
            <person name="Kumar C."/>
            <person name="Mortensen P."/>
            <person name="Mann M."/>
        </authorList>
    </citation>
    <scope>IDENTIFICATION BY MASS SPECTROMETRY [LARGE SCALE ANALYSIS]</scope>
    <source>
        <tissue>Cervix carcinoma</tissue>
    </source>
</reference>
<reference key="6">
    <citation type="journal article" date="2006" name="Nat. Biotechnol.">
        <title>A probability-based approach for high-throughput protein phosphorylation analysis and site localization.</title>
        <authorList>
            <person name="Beausoleil S.A."/>
            <person name="Villen J."/>
            <person name="Gerber S.A."/>
            <person name="Rush J."/>
            <person name="Gygi S.P."/>
        </authorList>
    </citation>
    <scope>PHOSPHORYLATION [LARGE SCALE ANALYSIS] AT SER-445</scope>
    <scope>IDENTIFICATION BY MASS SPECTROMETRY [LARGE SCALE ANALYSIS]</scope>
    <source>
        <tissue>Cervix carcinoma</tissue>
    </source>
</reference>
<reference key="7">
    <citation type="journal article" date="2008" name="Proc. Natl. Acad. Sci. U.S.A.">
        <title>A quantitative atlas of mitotic phosphorylation.</title>
        <authorList>
            <person name="Dephoure N."/>
            <person name="Zhou C."/>
            <person name="Villen J."/>
            <person name="Beausoleil S.A."/>
            <person name="Bakalarski C.E."/>
            <person name="Elledge S.J."/>
            <person name="Gygi S.P."/>
        </authorList>
    </citation>
    <scope>PHOSPHORYLATION [LARGE SCALE ANALYSIS] AT SER-445; SER-582 AND SER-589</scope>
    <scope>IDENTIFICATION BY MASS SPECTROMETRY [LARGE SCALE ANALYSIS]</scope>
    <source>
        <tissue>Cervix carcinoma</tissue>
    </source>
</reference>
<reference key="8">
    <citation type="journal article" date="2009" name="Sci. Signal.">
        <title>Quantitative phosphoproteomic analysis of T cell receptor signaling reveals system-wide modulation of protein-protein interactions.</title>
        <authorList>
            <person name="Mayya V."/>
            <person name="Lundgren D.H."/>
            <person name="Hwang S.-I."/>
            <person name="Rezaul K."/>
            <person name="Wu L."/>
            <person name="Eng J.K."/>
            <person name="Rodionov V."/>
            <person name="Han D.K."/>
        </authorList>
    </citation>
    <scope>IDENTIFICATION BY MASS SPECTROMETRY [LARGE SCALE ANALYSIS]</scope>
    <source>
        <tissue>Leukemic T-cell</tissue>
    </source>
</reference>
<reference key="9">
    <citation type="journal article" date="2010" name="Sci. Signal.">
        <title>Quantitative phosphoproteomics reveals widespread full phosphorylation site occupancy during mitosis.</title>
        <authorList>
            <person name="Olsen J.V."/>
            <person name="Vermeulen M."/>
            <person name="Santamaria A."/>
            <person name="Kumar C."/>
            <person name="Miller M.L."/>
            <person name="Jensen L.J."/>
            <person name="Gnad F."/>
            <person name="Cox J."/>
            <person name="Jensen T.S."/>
            <person name="Nigg E.A."/>
            <person name="Brunak S."/>
            <person name="Mann M."/>
        </authorList>
    </citation>
    <scope>PHOSPHORYLATION [LARGE SCALE ANALYSIS] AT SER-151; SER-445; SER-581; SER-582 AND SER-589</scope>
    <scope>IDENTIFICATION BY MASS SPECTROMETRY [LARGE SCALE ANALYSIS]</scope>
    <source>
        <tissue>Cervix carcinoma</tissue>
    </source>
</reference>
<reference key="10">
    <citation type="journal article" date="2011" name="BMC Syst. Biol.">
        <title>Initial characterization of the human central proteome.</title>
        <authorList>
            <person name="Burkard T.R."/>
            <person name="Planyavsky M."/>
            <person name="Kaupe I."/>
            <person name="Breitwieser F.P."/>
            <person name="Buerckstuemmer T."/>
            <person name="Bennett K.L."/>
            <person name="Superti-Furga G."/>
            <person name="Colinge J."/>
        </authorList>
    </citation>
    <scope>IDENTIFICATION BY MASS SPECTROMETRY [LARGE SCALE ANALYSIS]</scope>
</reference>
<reference key="11">
    <citation type="journal article" date="2011" name="Dev. Cell">
        <title>Arl8 and SKIP act together to link lysosomes to kinesin-1.</title>
        <authorList>
            <person name="Rosa-Ferreira C."/>
            <person name="Munro S."/>
        </authorList>
    </citation>
    <scope>FUNCTION</scope>
    <scope>INTERACTION WITH PLEKHM2</scope>
    <scope>SUBCELLULAR LOCATION</scope>
</reference>
<reference key="12">
    <citation type="journal article" date="2011" name="Sci. Signal.">
        <title>System-wide temporal characterization of the proteome and phosphoproteome of human embryonic stem cell differentiation.</title>
        <authorList>
            <person name="Rigbolt K.T."/>
            <person name="Prokhorova T.A."/>
            <person name="Akimov V."/>
            <person name="Henningsen J."/>
            <person name="Johansen P.T."/>
            <person name="Kratchmarova I."/>
            <person name="Kassem M."/>
            <person name="Mann M."/>
            <person name="Olsen J.V."/>
            <person name="Blagoev B."/>
        </authorList>
    </citation>
    <scope>PHOSPHORYLATION [LARGE SCALE ANALYSIS] AT SER-582 AND SER-610</scope>
    <scope>IDENTIFICATION BY MASS SPECTROMETRY [LARGE SCALE ANALYSIS]</scope>
</reference>
<reference key="13">
    <citation type="journal article" date="2013" name="J. Proteome Res.">
        <title>Toward a comprehensive characterization of a human cancer cell phosphoproteome.</title>
        <authorList>
            <person name="Zhou H."/>
            <person name="Di Palma S."/>
            <person name="Preisinger C."/>
            <person name="Peng M."/>
            <person name="Polat A.N."/>
            <person name="Heck A.J."/>
            <person name="Mohammed S."/>
        </authorList>
    </citation>
    <scope>PHOSPHORYLATION [LARGE SCALE ANALYSIS] AT SER-445; SER-521; SER-581; SER-582; SER-589; SER-608; SER-610 AND SER-615</scope>
    <scope>IDENTIFICATION BY MASS SPECTROMETRY [LARGE SCALE ANALYSIS]</scope>
    <source>
        <tissue>Cervix carcinoma</tissue>
        <tissue>Erythroleukemia</tissue>
    </source>
</reference>
<reference key="14">
    <citation type="journal article" date="2014" name="J. Proteomics">
        <title>An enzyme assisted RP-RPLC approach for in-depth analysis of human liver phosphoproteome.</title>
        <authorList>
            <person name="Bian Y."/>
            <person name="Song C."/>
            <person name="Cheng K."/>
            <person name="Dong M."/>
            <person name="Wang F."/>
            <person name="Huang J."/>
            <person name="Sun D."/>
            <person name="Wang L."/>
            <person name="Ye M."/>
            <person name="Zou H."/>
        </authorList>
    </citation>
    <scope>IDENTIFICATION BY MASS SPECTROMETRY [LARGE SCALE ANALYSIS]</scope>
    <source>
        <tissue>Liver</tissue>
    </source>
</reference>
<reference key="15">
    <citation type="journal article" date="2015" name="Hum. Mol. Genet.">
        <title>Overexpression of KLC2 due to a homozygous deletion in the non-coding region causes SPOAN syndrome.</title>
        <authorList>
            <person name="Melo U.S."/>
            <person name="Macedo-Souza L.I."/>
            <person name="Figueiredo T."/>
            <person name="Muotri A.R."/>
            <person name="Gleeson J.G."/>
            <person name="Coux G."/>
            <person name="Armas P."/>
            <person name="Calcaterra N.B."/>
            <person name="Kitajima J.P."/>
            <person name="Amorim S."/>
            <person name="Olavio T.R."/>
            <person name="Griesi-Oliveira K."/>
            <person name="Coatti G.C."/>
            <person name="Rocha C.R."/>
            <person name="Martins-Pinheiro M."/>
            <person name="Menck C.F."/>
            <person name="Zaki M.S."/>
            <person name="Kok F."/>
            <person name="Zatz M."/>
            <person name="Santos S."/>
        </authorList>
    </citation>
    <scope>INVOLVEMENT IN SPOAN</scope>
</reference>
<dbReference type="EMBL" id="AL136864">
    <property type="protein sequence ID" value="CAB66798.1"/>
    <property type="molecule type" value="mRNA"/>
</dbReference>
<dbReference type="EMBL" id="AK022449">
    <property type="protein sequence ID" value="BAB14039.1"/>
    <property type="molecule type" value="mRNA"/>
</dbReference>
<dbReference type="EMBL" id="AK022907">
    <property type="protein sequence ID" value="BAB14302.1"/>
    <property type="molecule type" value="mRNA"/>
</dbReference>
<dbReference type="EMBL" id="AK094593">
    <property type="protein sequence ID" value="BAG52895.1"/>
    <property type="molecule type" value="mRNA"/>
</dbReference>
<dbReference type="EMBL" id="AK315725">
    <property type="protein sequence ID" value="BAG38081.1"/>
    <property type="molecule type" value="mRNA"/>
</dbReference>
<dbReference type="EMBL" id="AP000759">
    <property type="status" value="NOT_ANNOTATED_CDS"/>
    <property type="molecule type" value="Genomic_DNA"/>
</dbReference>
<dbReference type="EMBL" id="AP001107">
    <property type="status" value="NOT_ANNOTATED_CDS"/>
    <property type="molecule type" value="Genomic_DNA"/>
</dbReference>
<dbReference type="EMBL" id="BC034373">
    <property type="protein sequence ID" value="AAH34373.1"/>
    <property type="molecule type" value="mRNA"/>
</dbReference>
<dbReference type="CCDS" id="CCDS44653.1">
    <molecule id="Q9H0B6-2"/>
</dbReference>
<dbReference type="CCDS" id="CCDS8130.1">
    <molecule id="Q9H0B6-1"/>
</dbReference>
<dbReference type="RefSeq" id="NP_001128246.1">
    <molecule id="Q9H0B6-2"/>
    <property type="nucleotide sequence ID" value="NM_001134774.2"/>
</dbReference>
<dbReference type="RefSeq" id="NP_001128247.1">
    <molecule id="Q9H0B6-1"/>
    <property type="nucleotide sequence ID" value="NM_001134775.2"/>
</dbReference>
<dbReference type="RefSeq" id="NP_001128248.1">
    <molecule id="Q9H0B6-1"/>
    <property type="nucleotide sequence ID" value="NM_001134776.2"/>
</dbReference>
<dbReference type="RefSeq" id="NP_001305663.1">
    <molecule id="Q9H0B6-1"/>
    <property type="nucleotide sequence ID" value="NM_001318734.2"/>
</dbReference>
<dbReference type="RefSeq" id="NP_073733.1">
    <molecule id="Q9H0B6-1"/>
    <property type="nucleotide sequence ID" value="NM_022822.3"/>
</dbReference>
<dbReference type="RefSeq" id="XP_005274240.1">
    <molecule id="Q9H0B6-1"/>
    <property type="nucleotide sequence ID" value="XM_005274183.2"/>
</dbReference>
<dbReference type="RefSeq" id="XP_047283370.1">
    <molecule id="Q9H0B6-1"/>
    <property type="nucleotide sequence ID" value="XM_047427414.1"/>
</dbReference>
<dbReference type="PDB" id="3CEQ">
    <property type="method" value="X-ray"/>
    <property type="resolution" value="2.75 A"/>
    <property type="chains" value="A/B=217-480"/>
</dbReference>
<dbReference type="PDB" id="3EDT">
    <property type="method" value="X-ray"/>
    <property type="resolution" value="2.70 A"/>
    <property type="chains" value="B/D/F/H=217-480"/>
</dbReference>
<dbReference type="PDBsum" id="3CEQ"/>
<dbReference type="PDBsum" id="3EDT"/>
<dbReference type="SMR" id="Q9H0B6"/>
<dbReference type="BioGRID" id="122313">
    <property type="interactions" value="558"/>
</dbReference>
<dbReference type="DIP" id="DIP-40381N"/>
<dbReference type="ELM" id="Q9H0B6"/>
<dbReference type="FunCoup" id="Q9H0B6">
    <property type="interactions" value="1627"/>
</dbReference>
<dbReference type="IntAct" id="Q9H0B6">
    <property type="interactions" value="108"/>
</dbReference>
<dbReference type="MINT" id="Q9H0B6"/>
<dbReference type="STRING" id="9606.ENSP00000399403"/>
<dbReference type="GlyGen" id="Q9H0B6">
    <property type="glycosylation" value="2 sites, 1 O-linked glycan (1 site)"/>
</dbReference>
<dbReference type="iPTMnet" id="Q9H0B6"/>
<dbReference type="MetOSite" id="Q9H0B6"/>
<dbReference type="PhosphoSitePlus" id="Q9H0B6"/>
<dbReference type="BioMuta" id="KLC2"/>
<dbReference type="DMDM" id="13878553"/>
<dbReference type="jPOST" id="Q9H0B6"/>
<dbReference type="MassIVE" id="Q9H0B6"/>
<dbReference type="PaxDb" id="9606-ENSP00000399403"/>
<dbReference type="PeptideAtlas" id="Q9H0B6"/>
<dbReference type="ProteomicsDB" id="80243">
    <molecule id="Q9H0B6-1"/>
</dbReference>
<dbReference type="ProteomicsDB" id="80244">
    <molecule id="Q9H0B6-2"/>
</dbReference>
<dbReference type="Pumba" id="Q9H0B6"/>
<dbReference type="Antibodypedia" id="30085">
    <property type="antibodies" value="203 antibodies from 26 providers"/>
</dbReference>
<dbReference type="DNASU" id="64837"/>
<dbReference type="Ensembl" id="ENST00000316924.9">
    <molecule id="Q9H0B6-1"/>
    <property type="protein sequence ID" value="ENSP00000314837.5"/>
    <property type="gene ID" value="ENSG00000174996.12"/>
</dbReference>
<dbReference type="Ensembl" id="ENST00000394066.6">
    <molecule id="Q9H0B6-2"/>
    <property type="protein sequence ID" value="ENSP00000377630.2"/>
    <property type="gene ID" value="ENSG00000174996.12"/>
</dbReference>
<dbReference type="Ensembl" id="ENST00000394067.7">
    <molecule id="Q9H0B6-1"/>
    <property type="protein sequence ID" value="ENSP00000377631.2"/>
    <property type="gene ID" value="ENSG00000174996.12"/>
</dbReference>
<dbReference type="Ensembl" id="ENST00000417856.5">
    <molecule id="Q9H0B6-1"/>
    <property type="protein sequence ID" value="ENSP00000399403.1"/>
    <property type="gene ID" value="ENSG00000174996.12"/>
</dbReference>
<dbReference type="Ensembl" id="ENST00000421552.5">
    <molecule id="Q9H0B6-2"/>
    <property type="protein sequence ID" value="ENSP00000408484.1"/>
    <property type="gene ID" value="ENSG00000174996.12"/>
</dbReference>
<dbReference type="GeneID" id="64837"/>
<dbReference type="KEGG" id="hsa:64837"/>
<dbReference type="MANE-Select" id="ENST00000394067.7">
    <property type="protein sequence ID" value="ENSP00000377631.2"/>
    <property type="RefSeq nucleotide sequence ID" value="NM_001318734.2"/>
    <property type="RefSeq protein sequence ID" value="NP_001305663.1"/>
</dbReference>
<dbReference type="UCSC" id="uc001ohb.3">
    <molecule id="Q9H0B6-1"/>
    <property type="organism name" value="human"/>
</dbReference>
<dbReference type="AGR" id="HGNC:20716"/>
<dbReference type="CTD" id="64837"/>
<dbReference type="DisGeNET" id="64837"/>
<dbReference type="GeneCards" id="KLC2"/>
<dbReference type="HGNC" id="HGNC:20716">
    <property type="gene designation" value="KLC2"/>
</dbReference>
<dbReference type="HPA" id="ENSG00000174996">
    <property type="expression patterns" value="Tissue enhanced (brain)"/>
</dbReference>
<dbReference type="MalaCards" id="KLC2"/>
<dbReference type="MIM" id="609541">
    <property type="type" value="phenotype"/>
</dbReference>
<dbReference type="MIM" id="611729">
    <property type="type" value="gene"/>
</dbReference>
<dbReference type="neXtProt" id="NX_Q9H0B6"/>
<dbReference type="OpenTargets" id="ENSG00000174996"/>
<dbReference type="Orphanet" id="320406">
    <property type="disease" value="Spastic paraplegia-optic atrophy-neuropathy syndrome"/>
</dbReference>
<dbReference type="PharmGKB" id="PA142671587"/>
<dbReference type="VEuPathDB" id="HostDB:ENSG00000174996"/>
<dbReference type="eggNOG" id="KOG1840">
    <property type="taxonomic scope" value="Eukaryota"/>
</dbReference>
<dbReference type="GeneTree" id="ENSGT00940000161973"/>
<dbReference type="HOGENOM" id="CLU_019953_0_0_1"/>
<dbReference type="InParanoid" id="Q9H0B6"/>
<dbReference type="OMA" id="DAECLYK"/>
<dbReference type="OrthoDB" id="413723at2759"/>
<dbReference type="PAN-GO" id="Q9H0B6">
    <property type="GO annotations" value="3 GO annotations based on evolutionary models"/>
</dbReference>
<dbReference type="PhylomeDB" id="Q9H0B6"/>
<dbReference type="TreeFam" id="TF314010"/>
<dbReference type="PathwayCommons" id="Q9H0B6"/>
<dbReference type="Reactome" id="R-HSA-2132295">
    <property type="pathway name" value="MHC class II antigen presentation"/>
</dbReference>
<dbReference type="Reactome" id="R-HSA-5625970">
    <property type="pathway name" value="RHO GTPases activate KTN1"/>
</dbReference>
<dbReference type="Reactome" id="R-HSA-6811434">
    <property type="pathway name" value="COPI-dependent Golgi-to-ER retrograde traffic"/>
</dbReference>
<dbReference type="Reactome" id="R-HSA-983189">
    <property type="pathway name" value="Kinesins"/>
</dbReference>
<dbReference type="SignaLink" id="Q9H0B6"/>
<dbReference type="SIGNOR" id="Q9H0B6"/>
<dbReference type="BioGRID-ORCS" id="64837">
    <property type="hits" value="359 hits in 1169 CRISPR screens"/>
</dbReference>
<dbReference type="CD-CODE" id="FB4E32DD">
    <property type="entry name" value="Presynaptic clusters and postsynaptic densities"/>
</dbReference>
<dbReference type="ChiTaRS" id="KLC2">
    <property type="organism name" value="human"/>
</dbReference>
<dbReference type="EvolutionaryTrace" id="Q9H0B6"/>
<dbReference type="GeneWiki" id="KLC2"/>
<dbReference type="GenomeRNAi" id="64837"/>
<dbReference type="Pharos" id="Q9H0B6">
    <property type="development level" value="Tbio"/>
</dbReference>
<dbReference type="PRO" id="PR:Q9H0B6"/>
<dbReference type="Proteomes" id="UP000005640">
    <property type="component" value="Chromosome 11"/>
</dbReference>
<dbReference type="RNAct" id="Q9H0B6">
    <property type="molecule type" value="protein"/>
</dbReference>
<dbReference type="Bgee" id="ENSG00000174996">
    <property type="expression patterns" value="Expressed in right hemisphere of cerebellum and 150 other cell types or tissues"/>
</dbReference>
<dbReference type="ExpressionAtlas" id="Q9H0B6">
    <property type="expression patterns" value="baseline and differential"/>
</dbReference>
<dbReference type="GO" id="GO:0005737">
    <property type="term" value="C:cytoplasm"/>
    <property type="evidence" value="ECO:0000318"/>
    <property type="project" value="GO_Central"/>
</dbReference>
<dbReference type="GO" id="GO:0005829">
    <property type="term" value="C:cytosol"/>
    <property type="evidence" value="ECO:0000314"/>
    <property type="project" value="HPA"/>
</dbReference>
<dbReference type="GO" id="GO:0005871">
    <property type="term" value="C:kinesin complex"/>
    <property type="evidence" value="ECO:0000250"/>
    <property type="project" value="HGNC-UCL"/>
</dbReference>
<dbReference type="GO" id="GO:0016938">
    <property type="term" value="C:kinesin I complex"/>
    <property type="evidence" value="ECO:0000303"/>
    <property type="project" value="BHF-UCL"/>
</dbReference>
<dbReference type="GO" id="GO:0005765">
    <property type="term" value="C:lysosomal membrane"/>
    <property type="evidence" value="ECO:0007669"/>
    <property type="project" value="UniProtKB-SubCell"/>
</dbReference>
<dbReference type="GO" id="GO:0016020">
    <property type="term" value="C:membrane"/>
    <property type="evidence" value="ECO:0007005"/>
    <property type="project" value="UniProtKB"/>
</dbReference>
<dbReference type="GO" id="GO:0005874">
    <property type="term" value="C:microtubule"/>
    <property type="evidence" value="ECO:0007669"/>
    <property type="project" value="UniProtKB-KW"/>
</dbReference>
<dbReference type="GO" id="GO:0005739">
    <property type="term" value="C:mitochondrion"/>
    <property type="evidence" value="ECO:0000314"/>
    <property type="project" value="HPA"/>
</dbReference>
<dbReference type="GO" id="GO:0005654">
    <property type="term" value="C:nucleoplasm"/>
    <property type="evidence" value="ECO:0000314"/>
    <property type="project" value="HPA"/>
</dbReference>
<dbReference type="GO" id="GO:0005886">
    <property type="term" value="C:plasma membrane"/>
    <property type="evidence" value="ECO:0000314"/>
    <property type="project" value="HPA"/>
</dbReference>
<dbReference type="GO" id="GO:0032991">
    <property type="term" value="C:protein-containing complex"/>
    <property type="evidence" value="ECO:0000314"/>
    <property type="project" value="LIFEdb"/>
</dbReference>
<dbReference type="GO" id="GO:0045296">
    <property type="term" value="F:cadherin binding"/>
    <property type="evidence" value="ECO:0007005"/>
    <property type="project" value="BHF-UCL"/>
</dbReference>
<dbReference type="GO" id="GO:0019894">
    <property type="term" value="F:kinesin binding"/>
    <property type="evidence" value="ECO:0000250"/>
    <property type="project" value="BHF-UCL"/>
</dbReference>
<dbReference type="GO" id="GO:0032418">
    <property type="term" value="P:lysosome localization"/>
    <property type="evidence" value="ECO:0000315"/>
    <property type="project" value="UniProtKB"/>
</dbReference>
<dbReference type="GO" id="GO:0007018">
    <property type="term" value="P:microtubule-based movement"/>
    <property type="evidence" value="ECO:0000318"/>
    <property type="project" value="GO_Central"/>
</dbReference>
<dbReference type="FunFam" id="1.25.40.10:FF:000003">
    <property type="entry name" value="kinesin light chain isoform X1"/>
    <property type="match status" value="1"/>
</dbReference>
<dbReference type="Gene3D" id="1.25.40.10">
    <property type="entry name" value="Tetratricopeptide repeat domain"/>
    <property type="match status" value="1"/>
</dbReference>
<dbReference type="InterPro" id="IPR002151">
    <property type="entry name" value="Kinesin_light"/>
</dbReference>
<dbReference type="InterPro" id="IPR015792">
    <property type="entry name" value="Kinesin_light_repeat"/>
</dbReference>
<dbReference type="InterPro" id="IPR011990">
    <property type="entry name" value="TPR-like_helical_dom_sf"/>
</dbReference>
<dbReference type="InterPro" id="IPR019734">
    <property type="entry name" value="TPR_rpt"/>
</dbReference>
<dbReference type="PANTHER" id="PTHR45783">
    <property type="entry name" value="KINESIN LIGHT CHAIN"/>
    <property type="match status" value="1"/>
</dbReference>
<dbReference type="PANTHER" id="PTHR45783:SF2">
    <property type="entry name" value="KINESIN LIGHT CHAIN 2"/>
    <property type="match status" value="1"/>
</dbReference>
<dbReference type="Pfam" id="PF13374">
    <property type="entry name" value="TPR_10"/>
    <property type="match status" value="1"/>
</dbReference>
<dbReference type="Pfam" id="PF13424">
    <property type="entry name" value="TPR_12"/>
    <property type="match status" value="2"/>
</dbReference>
<dbReference type="PRINTS" id="PR00381">
    <property type="entry name" value="KINESINLIGHT"/>
</dbReference>
<dbReference type="SMART" id="SM00028">
    <property type="entry name" value="TPR"/>
    <property type="match status" value="4"/>
</dbReference>
<dbReference type="SUPFAM" id="SSF48452">
    <property type="entry name" value="TPR-like"/>
    <property type="match status" value="2"/>
</dbReference>
<dbReference type="PROSITE" id="PS01160">
    <property type="entry name" value="KINESIN_LIGHT"/>
    <property type="match status" value="2"/>
</dbReference>
<dbReference type="PROSITE" id="PS50005">
    <property type="entry name" value="TPR"/>
    <property type="match status" value="5"/>
</dbReference>
<dbReference type="PROSITE" id="PS50293">
    <property type="entry name" value="TPR_REGION"/>
    <property type="match status" value="1"/>
</dbReference>